<protein>
    <recommendedName>
        <fullName>CRISPR system Cms endoribonuclease Csm3</fullName>
        <ecNumber>3.1.-.-</ecNumber>
    </recommendedName>
    <alternativeName>
        <fullName>CRISPR type III A-associated RAMP protein Csm3</fullName>
    </alternativeName>
</protein>
<organism>
    <name type="scientific">Methanocaldococcus jannaschii (strain ATCC 43067 / DSM 2661 / JAL-1 / JCM 10045 / NBRC 100440)</name>
    <name type="common">Methanococcus jannaschii</name>
    <dbReference type="NCBI Taxonomy" id="243232"/>
    <lineage>
        <taxon>Archaea</taxon>
        <taxon>Methanobacteriati</taxon>
        <taxon>Methanobacteriota</taxon>
        <taxon>Methanomada group</taxon>
        <taxon>Methanococci</taxon>
        <taxon>Methanococcales</taxon>
        <taxon>Methanocaldococcaceae</taxon>
        <taxon>Methanocaldococcus</taxon>
    </lineage>
</organism>
<sequence>MENLTLKGKVILEGIIELETGMHIGGTKETLKIGGTDNPVIRDAFGRILIPGSSLKGKIRALLERKDGKYKEDGRGNYLPHDCGECEICKIFGPHDSKNIKEPVRVIVRDAYLQPEENKKDYDYLEIKVENTIDRLKGTTIKGGIRNMERVVAGSKFKFEVVFNIYKESDKELIKKFIEGMKLLEDDYLGGSGSRGYGKIKFRDIKLICKPKEYYEGNENSKKESDEVESLNELESELDKIWGGINFN</sequence>
<comment type="function">
    <text evidence="1">CRISPR (clustered regularly interspaced short palindromic repeat) is an adaptive immune system that provides protection against mobile genetic elements (viruses, transposable elements and conjugative plasmids). CRISPR clusters contain spacers, sequences complementary to antecedent mobile elements, and target invading nucleic acids. CRISPR clusters are transcribed and processed into CRISPR RNA (crRNA). The type III-A Csm effector complex binds crRNA and acts as a crRNA-guided RNase, DNase and cyclic oligoadenylate synthase; binding of target RNA cognate to the crRNA is required for all activities.</text>
</comment>
<comment type="function">
    <text evidence="1 2">This subunit has the target ssRNA endonuclease activity; it cleaves multiple sites in the target RNA at 6 nucleotide intervals (By similarity). The Csm3-Csm4 complex binds both crRNA and a non-specific RNA; Csm3 alone was not seen to bind RNA (PubMed:25451598).</text>
</comment>
<comment type="subunit">
    <text evidence="1 2">Part of the Csm effector complex that includes Cas10, Csm2, Csm3, Csm4 and Csm5 (By similarity). Stable Csm3-Csm4 (which crystallizes as 2 heterodimers) and Cas10-Csm1-Csm3-Csm4 subcomplexes can be isolated; Cas10 and Csm3 probably do not directly interact (PubMed:25451598).</text>
</comment>
<comment type="miscellaneous">
    <text evidence="3">Encoded in a type III-A CRISPR locus.</text>
</comment>
<comment type="similarity">
    <text evidence="3">Belongs to the CRISPR-associated Csm3 family.</text>
</comment>
<gene>
    <name type="primary">csm3</name>
    <name type="ordered locus">MJ1669</name>
</gene>
<proteinExistence type="evidence at protein level"/>
<feature type="chain" id="PRO_0000107466" description="CRISPR system Cms endoribonuclease Csm3">
    <location>
        <begin position="1"/>
        <end position="248"/>
    </location>
</feature>
<feature type="binding site" evidence="2 4">
    <location>
        <position position="81"/>
    </location>
    <ligand>
        <name>Zn(2+)</name>
        <dbReference type="ChEBI" id="CHEBI:29105"/>
    </ligand>
</feature>
<feature type="binding site" evidence="2 4">
    <location>
        <position position="83"/>
    </location>
    <ligand>
        <name>Zn(2+)</name>
        <dbReference type="ChEBI" id="CHEBI:29105"/>
    </ligand>
</feature>
<feature type="binding site" evidence="2 4">
    <location>
        <position position="89"/>
    </location>
    <ligand>
        <name>Zn(2+)</name>
        <dbReference type="ChEBI" id="CHEBI:29105"/>
    </ligand>
</feature>
<feature type="mutagenesis site" description="Wild-type interaction with Csm4." evidence="2">
    <original>DAF</original>
    <variation>AAA</variation>
    <location>
        <begin position="43"/>
        <end position="45"/>
    </location>
</feature>
<feature type="mutagenesis site" description="Wild-type interaction with Csm4." evidence="2">
    <original>R</original>
    <variation>A</variation>
    <location>
        <position position="109"/>
    </location>
</feature>
<feature type="mutagenesis site" description="No longer interacts with Csm4." evidence="2">
    <original>YY</original>
    <variation>AA</variation>
    <location>
        <begin position="214"/>
        <end position="215"/>
    </location>
</feature>
<feature type="mutagenesis site" description="Wild-type interaction with Csm4." evidence="2">
    <original>E</original>
    <variation>A</variation>
    <location>
        <position position="216"/>
    </location>
</feature>
<feature type="strand" evidence="5">
    <location>
        <begin position="8"/>
        <end position="20"/>
    </location>
</feature>
<feature type="strand" evidence="5">
    <location>
        <begin position="40"/>
        <end position="42"/>
    </location>
</feature>
<feature type="strand" evidence="5">
    <location>
        <begin position="48"/>
        <end position="50"/>
    </location>
</feature>
<feature type="helix" evidence="5">
    <location>
        <begin position="52"/>
        <end position="65"/>
    </location>
</feature>
<feature type="strand" evidence="5">
    <location>
        <begin position="84"/>
        <end position="86"/>
    </location>
</feature>
<feature type="helix" evidence="5">
    <location>
        <begin position="87"/>
        <end position="91"/>
    </location>
</feature>
<feature type="helix" evidence="5">
    <location>
        <begin position="97"/>
        <end position="99"/>
    </location>
</feature>
<feature type="strand" evidence="5">
    <location>
        <begin position="106"/>
        <end position="108"/>
    </location>
</feature>
<feature type="strand" evidence="5">
    <location>
        <begin position="111"/>
        <end position="113"/>
    </location>
</feature>
<feature type="strand" evidence="5">
    <location>
        <begin position="156"/>
        <end position="165"/>
    </location>
</feature>
<feature type="turn" evidence="5">
    <location>
        <begin position="168"/>
        <end position="170"/>
    </location>
</feature>
<feature type="helix" evidence="5">
    <location>
        <begin position="171"/>
        <end position="185"/>
    </location>
</feature>
<feature type="strand" evidence="5">
    <location>
        <begin position="189"/>
        <end position="192"/>
    </location>
</feature>
<feature type="strand" evidence="5">
    <location>
        <begin position="195"/>
        <end position="197"/>
    </location>
</feature>
<feature type="strand" evidence="5">
    <location>
        <begin position="200"/>
        <end position="211"/>
    </location>
</feature>
<feature type="helix" evidence="5">
    <location>
        <begin position="212"/>
        <end position="215"/>
    </location>
</feature>
<feature type="helix" evidence="5">
    <location>
        <begin position="219"/>
        <end position="221"/>
    </location>
</feature>
<feature type="strand" evidence="5">
    <location>
        <begin position="228"/>
        <end position="230"/>
    </location>
</feature>
<feature type="helix" evidence="5">
    <location>
        <begin position="231"/>
        <end position="233"/>
    </location>
</feature>
<feature type="helix" evidence="5">
    <location>
        <begin position="234"/>
        <end position="239"/>
    </location>
</feature>
<name>CSM3_METJA</name>
<keyword id="KW-0002">3D-structure</keyword>
<keyword id="KW-0051">Antiviral defense</keyword>
<keyword id="KW-0255">Endonuclease</keyword>
<keyword id="KW-0378">Hydrolase</keyword>
<keyword id="KW-0479">Metal-binding</keyword>
<keyword id="KW-0540">Nuclease</keyword>
<keyword id="KW-1185">Reference proteome</keyword>
<keyword id="KW-0694">RNA-binding</keyword>
<keyword id="KW-0862">Zinc</keyword>
<dbReference type="EC" id="3.1.-.-"/>
<dbReference type="EMBL" id="L77117">
    <property type="protein sequence ID" value="AAB99689.1"/>
    <property type="molecule type" value="Genomic_DNA"/>
</dbReference>
<dbReference type="PIR" id="C64508">
    <property type="entry name" value="C64508"/>
</dbReference>
<dbReference type="RefSeq" id="WP_010871193.1">
    <property type="nucleotide sequence ID" value="NC_000909.1"/>
</dbReference>
<dbReference type="PDB" id="4QTS">
    <property type="method" value="X-ray"/>
    <property type="resolution" value="3.10 A"/>
    <property type="chains" value="C/D=1-248"/>
</dbReference>
<dbReference type="PDBsum" id="4QTS"/>
<dbReference type="SMR" id="Q59063"/>
<dbReference type="FunCoup" id="Q59063">
    <property type="interactions" value="1"/>
</dbReference>
<dbReference type="STRING" id="243232.MJ_1669"/>
<dbReference type="PaxDb" id="243232-MJ_1669"/>
<dbReference type="EnsemblBacteria" id="AAB99689">
    <property type="protein sequence ID" value="AAB99689"/>
    <property type="gene ID" value="MJ_1669"/>
</dbReference>
<dbReference type="GeneID" id="1452578"/>
<dbReference type="KEGG" id="mja:MJ_1669"/>
<dbReference type="eggNOG" id="arCOG02658">
    <property type="taxonomic scope" value="Archaea"/>
</dbReference>
<dbReference type="HOGENOM" id="CLU_067743_0_0_2"/>
<dbReference type="InParanoid" id="Q59063"/>
<dbReference type="OrthoDB" id="44077at2157"/>
<dbReference type="PhylomeDB" id="Q59063"/>
<dbReference type="EvolutionaryTrace" id="Q59063"/>
<dbReference type="Proteomes" id="UP000000805">
    <property type="component" value="Chromosome"/>
</dbReference>
<dbReference type="GO" id="GO:0004519">
    <property type="term" value="F:endonuclease activity"/>
    <property type="evidence" value="ECO:0007669"/>
    <property type="project" value="UniProtKB-KW"/>
</dbReference>
<dbReference type="GO" id="GO:0046872">
    <property type="term" value="F:metal ion binding"/>
    <property type="evidence" value="ECO:0007669"/>
    <property type="project" value="UniProtKB-KW"/>
</dbReference>
<dbReference type="GO" id="GO:0003723">
    <property type="term" value="F:RNA binding"/>
    <property type="evidence" value="ECO:0007669"/>
    <property type="project" value="UniProtKB-KW"/>
</dbReference>
<dbReference type="GO" id="GO:0051607">
    <property type="term" value="P:defense response to virus"/>
    <property type="evidence" value="ECO:0007669"/>
    <property type="project" value="UniProtKB-KW"/>
</dbReference>
<dbReference type="CDD" id="cd09684">
    <property type="entry name" value="Csm3_III-A"/>
    <property type="match status" value="1"/>
</dbReference>
<dbReference type="InterPro" id="IPR013412">
    <property type="entry name" value="CRISPR-assoc_RAMP_Csm3"/>
</dbReference>
<dbReference type="InterPro" id="IPR052216">
    <property type="entry name" value="CRISPR_Csm3_endoribonuclease"/>
</dbReference>
<dbReference type="InterPro" id="IPR005537">
    <property type="entry name" value="RAMP_III_fam"/>
</dbReference>
<dbReference type="NCBIfam" id="TIGR02582">
    <property type="entry name" value="cas7_TM1809"/>
    <property type="match status" value="1"/>
</dbReference>
<dbReference type="PANTHER" id="PTHR35579">
    <property type="entry name" value="CRISPR SYSTEM CMS ENDORIBONUCLEASE CSM3"/>
    <property type="match status" value="1"/>
</dbReference>
<dbReference type="PANTHER" id="PTHR35579:SF3">
    <property type="entry name" value="CRISPR SYSTEM CMS ENDORIBONUCLEASE CSM3"/>
    <property type="match status" value="1"/>
</dbReference>
<dbReference type="Pfam" id="PF03787">
    <property type="entry name" value="RAMPs"/>
    <property type="match status" value="1"/>
</dbReference>
<reference key="1">
    <citation type="journal article" date="1996" name="Science">
        <title>Complete genome sequence of the methanogenic archaeon, Methanococcus jannaschii.</title>
        <authorList>
            <person name="Bult C.J."/>
            <person name="White O."/>
            <person name="Olsen G.J."/>
            <person name="Zhou L."/>
            <person name="Fleischmann R.D."/>
            <person name="Sutton G.G."/>
            <person name="Blake J.A."/>
            <person name="FitzGerald L.M."/>
            <person name="Clayton R.A."/>
            <person name="Gocayne J.D."/>
            <person name="Kerlavage A.R."/>
            <person name="Dougherty B.A."/>
            <person name="Tomb J.-F."/>
            <person name="Adams M.D."/>
            <person name="Reich C.I."/>
            <person name="Overbeek R."/>
            <person name="Kirkness E.F."/>
            <person name="Weinstock K.G."/>
            <person name="Merrick J.M."/>
            <person name="Glodek A."/>
            <person name="Scott J.L."/>
            <person name="Geoghagen N.S.M."/>
            <person name="Weidman J.F."/>
            <person name="Fuhrmann J.L."/>
            <person name="Nguyen D."/>
            <person name="Utterback T.R."/>
            <person name="Kelley J.M."/>
            <person name="Peterson J.D."/>
            <person name="Sadow P.W."/>
            <person name="Hanna M.C."/>
            <person name="Cotton M.D."/>
            <person name="Roberts K.M."/>
            <person name="Hurst M.A."/>
            <person name="Kaine B.P."/>
            <person name="Borodovsky M."/>
            <person name="Klenk H.-P."/>
            <person name="Fraser C.M."/>
            <person name="Smith H.O."/>
            <person name="Woese C.R."/>
            <person name="Venter J.C."/>
        </authorList>
    </citation>
    <scope>NUCLEOTIDE SEQUENCE [LARGE SCALE GENOMIC DNA]</scope>
    <source>
        <strain>ATCC 43067 / DSM 2661 / JAL-1 / JCM 10045 / NBRC 100440</strain>
    </source>
</reference>
<reference evidence="4" key="2">
    <citation type="journal article" date="2015" name="J. Mol. Biol.">
        <title>Crystal structure of the Csm3-Csm4 subcomplex in the type III-A CRISPR-Cas interference complex.</title>
        <authorList>
            <person name="Numata T."/>
            <person name="Inanaga H."/>
            <person name="Sato C."/>
            <person name="Osawa T."/>
        </authorList>
    </citation>
    <scope>X-RAY CRYSTALLOGRAPHY (3.10 ANGSTROMS) IN COMPLEX WITH ZINC</scope>
    <scope>SUBUNIT</scope>
    <scope>MUTAGENESIS OF 43-ASP--PHE-45; ARG-109; 214-TYR-TYR-215 AND GLU-216</scope>
    <source>
        <strain>ATCC 43067 / DSM 2661 / JAL-1 / JCM 10045 / NBRC 100440</strain>
    </source>
</reference>
<accession>Q59063</accession>
<evidence type="ECO:0000250" key="1">
    <source>
        <dbReference type="UniProtKB" id="A0A0A7HIF0"/>
    </source>
</evidence>
<evidence type="ECO:0000269" key="2">
    <source>
    </source>
</evidence>
<evidence type="ECO:0000305" key="3"/>
<evidence type="ECO:0007744" key="4">
    <source>
        <dbReference type="PDB" id="4QTS"/>
    </source>
</evidence>
<evidence type="ECO:0007829" key="5">
    <source>
        <dbReference type="PDB" id="4QTS"/>
    </source>
</evidence>